<name>SVS3A_MOUSE</name>
<organism evidence="10">
    <name type="scientific">Mus musculus</name>
    <name type="common">Mouse</name>
    <dbReference type="NCBI Taxonomy" id="10090"/>
    <lineage>
        <taxon>Eukaryota</taxon>
        <taxon>Metazoa</taxon>
        <taxon>Chordata</taxon>
        <taxon>Craniata</taxon>
        <taxon>Vertebrata</taxon>
        <taxon>Euteleostomi</taxon>
        <taxon>Mammalia</taxon>
        <taxon>Eutheria</taxon>
        <taxon>Euarchontoglires</taxon>
        <taxon>Glires</taxon>
        <taxon>Rodentia</taxon>
        <taxon>Myomorpha</taxon>
        <taxon>Muroidea</taxon>
        <taxon>Muridae</taxon>
        <taxon>Murinae</taxon>
        <taxon>Mus</taxon>
        <taxon>Mus</taxon>
    </lineage>
</organism>
<comment type="function">
    <text evidence="2">Component of the copulatory plug.</text>
</comment>
<comment type="subcellular location">
    <subcellularLocation>
        <location evidence="2">Secreted</location>
    </subcellularLocation>
</comment>
<comment type="alternative products">
    <event type="alternative splicing"/>
    <isoform>
        <id>F2Z472-1</id>
        <name>1</name>
        <sequence type="displayed"/>
    </isoform>
    <isoform>
        <id>F2Z472-2</id>
        <name>2</name>
        <sequence type="described" ref="VSP_059284"/>
    </isoform>
</comment>
<comment type="tissue specificity">
    <text evidence="2">Highly expressed in the seminal vesicle where it is detected in luminal epithelium of the mucosa folds, and also in luminal fluid (at protein level). Not detected in other tissues tested.</text>
</comment>
<comment type="developmental stage">
    <text evidence="2">First detected at 3 weeks of age. Expression increases through to 6 weeks of age and remains high thereafter.</text>
</comment>
<comment type="induction">
    <text evidence="2">Up-regulated in response to androgens.</text>
</comment>
<comment type="PTM">
    <text evidence="2">Glycosylated.</text>
</comment>
<comment type="PTM">
    <text evidence="2">Covalently cross-linked by transglutaminase, which is important for the formation of the gelatinous copulatory plug. Five repeats of Q-X-K-(S/T) in the central region of the protein serve as the transglutaminase substrate site(s).</text>
</comment>
<comment type="miscellaneous">
    <molecule>Isoform 2</molecule>
    <text evidence="4">May be due to competing acceptor splice site.</text>
</comment>
<keyword id="KW-0025">Alternative splicing</keyword>
<keyword id="KW-0188">Copulatory plug</keyword>
<keyword id="KW-0325">Glycoprotein</keyword>
<keyword id="KW-1185">Reference proteome</keyword>
<keyword id="KW-0677">Repeat</keyword>
<keyword id="KW-0964">Secreted</keyword>
<keyword id="KW-0732">Signal</keyword>
<dbReference type="EMBL" id="AF242220">
    <property type="protein sequence ID" value="AAF61258.1"/>
    <property type="molecule type" value="mRNA"/>
</dbReference>
<dbReference type="EMBL" id="AF323459">
    <property type="protein sequence ID" value="AAL37256.1"/>
    <property type="molecule type" value="Genomic_DNA"/>
</dbReference>
<dbReference type="EMBL" id="AL590429">
    <property type="status" value="NOT_ANNOTATED_CDS"/>
    <property type="molecule type" value="Genomic_DNA"/>
</dbReference>
<dbReference type="EMBL" id="CH466551">
    <property type="protein sequence ID" value="EDL06372.1"/>
    <property type="molecule type" value="Genomic_DNA"/>
</dbReference>
<dbReference type="EMBL" id="CH466551">
    <property type="protein sequence ID" value="EDL06375.1"/>
    <property type="molecule type" value="Genomic_DNA"/>
</dbReference>
<dbReference type="EMBL" id="BC131996">
    <property type="protein sequence ID" value="AAI31997.1"/>
    <property type="molecule type" value="mRNA"/>
</dbReference>
<dbReference type="EMBL" id="BC131998">
    <property type="protein sequence ID" value="AAI31999.1"/>
    <property type="molecule type" value="mRNA"/>
</dbReference>
<dbReference type="CCDS" id="CCDS17030.1">
    <molecule id="F2Z472-1"/>
</dbReference>
<dbReference type="CCDS" id="CCDS79860.1">
    <molecule id="F2Z472-2"/>
</dbReference>
<dbReference type="RefSeq" id="NP_001298043.1">
    <molecule id="F2Z472-2"/>
    <property type="nucleotide sequence ID" value="NM_001311114.1"/>
</dbReference>
<dbReference type="RefSeq" id="NP_067338.2">
    <molecule id="F2Z472-1"/>
    <property type="nucleotide sequence ID" value="NM_021363.2"/>
</dbReference>
<dbReference type="FunCoup" id="F2Z472">
    <property type="interactions" value="2"/>
</dbReference>
<dbReference type="STRING" id="10090.ENSMUSP00000017147"/>
<dbReference type="PaxDb" id="10090-ENSMUSP00000017147"/>
<dbReference type="ProteomicsDB" id="254728">
    <molecule id="F2Z472-1"/>
</dbReference>
<dbReference type="ProteomicsDB" id="254729">
    <molecule id="F2Z472-2"/>
</dbReference>
<dbReference type="Ensembl" id="ENSMUST00000017147.8">
    <molecule id="F2Z472-1"/>
    <property type="protein sequence ID" value="ENSMUSP00000017147.8"/>
    <property type="gene ID" value="ENSMUSG00000017003.8"/>
</dbReference>
<dbReference type="Ensembl" id="ENSMUST00000109370.2">
    <molecule id="F2Z472-2"/>
    <property type="protein sequence ID" value="ENSMUSP00000104995.2"/>
    <property type="gene ID" value="ENSMUSG00000017003.8"/>
</dbReference>
<dbReference type="GeneID" id="64335"/>
<dbReference type="KEGG" id="mmu:64335"/>
<dbReference type="UCSC" id="uc008nuf.2">
    <molecule id="F2Z472-1"/>
    <property type="organism name" value="mouse"/>
</dbReference>
<dbReference type="AGR" id="MGI:1927635"/>
<dbReference type="CTD" id="64335"/>
<dbReference type="MGI" id="MGI:1927635">
    <property type="gene designation" value="Svs3a"/>
</dbReference>
<dbReference type="VEuPathDB" id="HostDB:ENSMUSG00000017003"/>
<dbReference type="GeneTree" id="ENSGT00940000162560"/>
<dbReference type="HOGENOM" id="CLU_1049563_0_0_1"/>
<dbReference type="InParanoid" id="F2Z472"/>
<dbReference type="OMA" id="QHAYSQD"/>
<dbReference type="OrthoDB" id="9622898at2759"/>
<dbReference type="PhylomeDB" id="F2Z472"/>
<dbReference type="TreeFam" id="TF338974"/>
<dbReference type="Reactome" id="R-MMU-6803157">
    <property type="pathway name" value="Antimicrobial peptides"/>
</dbReference>
<dbReference type="BioGRID-ORCS" id="64335">
    <property type="hits" value="1 hit in 45 CRISPR screens"/>
</dbReference>
<dbReference type="ChiTaRS" id="Svs3a">
    <property type="organism name" value="mouse"/>
</dbReference>
<dbReference type="PRO" id="PR:F2Z472"/>
<dbReference type="Proteomes" id="UP000000589">
    <property type="component" value="Chromosome 2"/>
</dbReference>
<dbReference type="RNAct" id="F2Z472">
    <property type="molecule type" value="protein"/>
</dbReference>
<dbReference type="Bgee" id="ENSMUSG00000017003">
    <property type="expression patterns" value="Expressed in seminal vesicle and 8 other cell types or tissues"/>
</dbReference>
<dbReference type="GO" id="GO:0005576">
    <property type="term" value="C:extracellular region"/>
    <property type="evidence" value="ECO:0000314"/>
    <property type="project" value="MGI"/>
</dbReference>
<dbReference type="GO" id="GO:0042628">
    <property type="term" value="P:mating plug formation"/>
    <property type="evidence" value="ECO:0000314"/>
    <property type="project" value="MGI"/>
</dbReference>
<dbReference type="PANTHER" id="PTHR10547">
    <property type="entry name" value="SEMENOGELIN/SEMINAL VESICLE SECRETORY PROTEIN"/>
    <property type="match status" value="1"/>
</dbReference>
<dbReference type="PANTHER" id="PTHR10547:SF7">
    <property type="entry name" value="SEMINAL VESICLE SECRETORY PROTEIN 3A-RELATED"/>
    <property type="match status" value="1"/>
</dbReference>
<gene>
    <name evidence="9" type="primary">Svs3a</name>
    <name evidence="9" type="synonym">Svs3</name>
</gene>
<accession>F2Z472</accession>
<accession>F2Z467</accession>
<accession>Q8VI13</accession>
<accession>Q9JKD2</accession>
<proteinExistence type="evidence at protein level"/>
<sequence length="265" mass="29967">MKSIFFSLSLLLLLEKKAAGIELYAGGTKGHFLVKTSPLMFIGKNQFLYGHKEEQEEAPEESIFVQTKHHEYGQDADADMGGALSSQELTSLKEDIVCEEEDELAQQKSQLPSQSQIKSQTQVKSYAAQLKSQPGQLKTIGQVKSQTMLKSHGAPLKSFKARLNLREDIPQQVKGRGYGLAEDLAQVRQQPAKVHRLKGKHRQSRKTAAFYPQFRRRSRPYPRYFVQFQEQLQGSVHHTKSFYPGPGMCYCPRGGVILYQDAFTD</sequence>
<feature type="signal peptide" evidence="1">
    <location>
        <begin position="1"/>
        <end position="20"/>
    </location>
</feature>
<feature type="chain" id="PRO_5003291021" description="Seminal vesicle secretory protein 3A">
    <location>
        <begin position="21"/>
        <end position="265"/>
    </location>
</feature>
<feature type="repeat" description="1" evidence="5">
    <location>
        <begin position="116"/>
        <end position="119"/>
    </location>
</feature>
<feature type="repeat" description="2" evidence="5">
    <location>
        <begin position="122"/>
        <end position="125"/>
    </location>
</feature>
<feature type="repeat" description="3" evidence="5">
    <location>
        <begin position="129"/>
        <end position="132"/>
    </location>
</feature>
<feature type="repeat" description="4" evidence="5">
    <location>
        <begin position="136"/>
        <end position="139"/>
    </location>
</feature>
<feature type="repeat" description="5" evidence="5">
    <location>
        <begin position="142"/>
        <end position="145"/>
    </location>
</feature>
<feature type="region of interest" description="5 X 4 AA tandem repeats of Q-X-K-[ST]" evidence="5">
    <location>
        <begin position="116"/>
        <end position="145"/>
    </location>
</feature>
<feature type="splice variant" id="VSP_059284" description="In isoform 2.">
    <location>
        <position position="25"/>
    </location>
</feature>
<feature type="sequence conflict" description="In Ref. 1; AAF61258, 4; AAI31997/AAI31999 and 3; AAL37256/EDL06372/EDL06375." evidence="4" ref="1 4 3">
    <original>E</original>
    <variation>A</variation>
    <location>
        <position position="71"/>
    </location>
</feature>
<feature type="sequence conflict" description="In Ref. 1; AAF61258 and 4; AAI31997/AAI31999." evidence="4" ref="1 4">
    <original>R</original>
    <variation>H</variation>
    <location>
        <position position="217"/>
    </location>
</feature>
<evidence type="ECO:0000255" key="1"/>
<evidence type="ECO:0000269" key="2">
    <source>
    </source>
</evidence>
<evidence type="ECO:0000303" key="3">
    <source>
    </source>
</evidence>
<evidence type="ECO:0000305" key="4"/>
<evidence type="ECO:0000305" key="5">
    <source>
    </source>
</evidence>
<evidence type="ECO:0000312" key="6">
    <source>
        <dbReference type="EMBL" id="AAF61258.1"/>
    </source>
</evidence>
<evidence type="ECO:0000312" key="7">
    <source>
        <dbReference type="EMBL" id="AAI31997.1"/>
    </source>
</evidence>
<evidence type="ECO:0000312" key="8">
    <source>
        <dbReference type="EMBL" id="EDL06372.1"/>
    </source>
</evidence>
<evidence type="ECO:0000312" key="9">
    <source>
        <dbReference type="MGI" id="MGI:1927635"/>
    </source>
</evidence>
<evidence type="ECO:0000312" key="10">
    <source>
        <dbReference type="Proteomes" id="UP000000589"/>
    </source>
</evidence>
<reference evidence="6" key="1">
    <citation type="journal article" date="2002" name="J. Biol. Chem.">
        <title>Localization of the transglutaminase cross-linking site in SVS III, a novel glycoprotein secreted from mouse seminal vesicle.</title>
        <authorList>
            <person name="Lin H.J."/>
            <person name="Luo C.W."/>
            <person name="Chen Y.H."/>
        </authorList>
    </citation>
    <scope>NUCLEOTIDE SEQUENCE [GENOMIC DNA / MRNA] (ISOFORM 1)</scope>
    <scope>FUNCTION</scope>
    <scope>SUBCELLULAR LOCATION</scope>
    <scope>TISSUE SPECIFICITY</scope>
    <scope>DEVELOPMENTAL STAGE</scope>
    <scope>INDUCTION</scope>
    <scope>GLYCOSYLATION</scope>
    <scope>TRANSGLUTAMINATION</scope>
    <scope>REPEATS</scope>
    <scope>IDENTIFICATION BY MASS SPECTROMETRY</scope>
    <source>
        <tissue evidence="3">Seminal vesicle</tissue>
    </source>
</reference>
<reference evidence="10" key="2">
    <citation type="journal article" date="2009" name="PLoS Biol.">
        <title>Lineage-specific biology revealed by a finished genome assembly of the mouse.</title>
        <authorList>
            <person name="Church D.M."/>
            <person name="Goodstadt L."/>
            <person name="Hillier L.W."/>
            <person name="Zody M.C."/>
            <person name="Goldstein S."/>
            <person name="She X."/>
            <person name="Bult C.J."/>
            <person name="Agarwala R."/>
            <person name="Cherry J.L."/>
            <person name="DiCuccio M."/>
            <person name="Hlavina W."/>
            <person name="Kapustin Y."/>
            <person name="Meric P."/>
            <person name="Maglott D."/>
            <person name="Birtle Z."/>
            <person name="Marques A.C."/>
            <person name="Graves T."/>
            <person name="Zhou S."/>
            <person name="Teague B."/>
            <person name="Potamousis K."/>
            <person name="Churas C."/>
            <person name="Place M."/>
            <person name="Herschleb J."/>
            <person name="Runnheim R."/>
            <person name="Forrest D."/>
            <person name="Amos-Landgraf J."/>
            <person name="Schwartz D.C."/>
            <person name="Cheng Z."/>
            <person name="Lindblad-Toh K."/>
            <person name="Eichler E.E."/>
            <person name="Ponting C.P."/>
        </authorList>
    </citation>
    <scope>NUCLEOTIDE SEQUENCE [LARGE SCALE GENOMIC DNA]</scope>
    <source>
        <strain>C57BL/6J</strain>
    </source>
</reference>
<reference evidence="8" key="3">
    <citation type="submission" date="2005-07" db="EMBL/GenBank/DDBJ databases">
        <authorList>
            <person name="Mural R.J."/>
            <person name="Adams M.D."/>
            <person name="Myers E.W."/>
            <person name="Smith H.O."/>
            <person name="Venter J.C."/>
        </authorList>
    </citation>
    <scope>NUCLEOTIDE SEQUENCE [LARGE SCALE GENOMIC DNA]</scope>
</reference>
<reference evidence="7" key="4">
    <citation type="journal article" date="2004" name="Genome Res.">
        <title>The status, quality, and expansion of the NIH full-length cDNA project: the Mammalian Gene Collection (MGC).</title>
        <authorList>
            <consortium name="The MGC Project Team"/>
        </authorList>
    </citation>
    <scope>NUCLEOTIDE SEQUENCE [LARGE SCALE MRNA] (ISOFORM 1)</scope>
</reference>
<protein>
    <recommendedName>
        <fullName evidence="9">Seminal vesicle secretory protein 3A</fullName>
    </recommendedName>
    <alternativeName>
        <fullName evidence="3">Seminal vesicle secretory protein III</fullName>
        <shortName evidence="3">SVS III</shortName>
    </alternativeName>
</protein>